<keyword id="KW-0020">Allergen</keyword>
<keyword id="KW-0106">Calcium</keyword>
<keyword id="KW-0903">Direct protein sequencing</keyword>
<keyword id="KW-1015">Disulfide bond</keyword>
<keyword id="KW-0325">Glycoprotein</keyword>
<keyword id="KW-0378">Hydrolase</keyword>
<keyword id="KW-0442">Lipid degradation</keyword>
<keyword id="KW-0443">Lipid metabolism</keyword>
<keyword id="KW-0479">Metal-binding</keyword>
<keyword id="KW-0964">Secreted</keyword>
<name>PA2_BOMPE</name>
<dbReference type="EC" id="3.1.1.4"/>
<dbReference type="PIR" id="B56338">
    <property type="entry name" value="B56338"/>
</dbReference>
<dbReference type="SMR" id="Q7M4I6"/>
<dbReference type="Allergome" id="153">
    <property type="allergen name" value="Bom p 1"/>
</dbReference>
<dbReference type="Allergome" id="3157">
    <property type="allergen name" value="Bom p 1.0101"/>
</dbReference>
<dbReference type="GO" id="GO:0005576">
    <property type="term" value="C:extracellular region"/>
    <property type="evidence" value="ECO:0007669"/>
    <property type="project" value="UniProtKB-SubCell"/>
</dbReference>
<dbReference type="GO" id="GO:0046872">
    <property type="term" value="F:metal ion binding"/>
    <property type="evidence" value="ECO:0007669"/>
    <property type="project" value="UniProtKB-KW"/>
</dbReference>
<dbReference type="GO" id="GO:0004623">
    <property type="term" value="F:phospholipase A2 activity"/>
    <property type="evidence" value="ECO:0007669"/>
    <property type="project" value="UniProtKB-EC"/>
</dbReference>
<dbReference type="GO" id="GO:0050482">
    <property type="term" value="P:arachidonate secretion"/>
    <property type="evidence" value="ECO:0007669"/>
    <property type="project" value="InterPro"/>
</dbReference>
<dbReference type="GO" id="GO:0016042">
    <property type="term" value="P:lipid catabolic process"/>
    <property type="evidence" value="ECO:0007669"/>
    <property type="project" value="UniProtKB-KW"/>
</dbReference>
<dbReference type="GO" id="GO:0006644">
    <property type="term" value="P:phospholipid metabolic process"/>
    <property type="evidence" value="ECO:0007669"/>
    <property type="project" value="InterPro"/>
</dbReference>
<dbReference type="CDD" id="cd04704">
    <property type="entry name" value="PLA2_bee_venom_like"/>
    <property type="match status" value="1"/>
</dbReference>
<dbReference type="FunFam" id="1.20.90.10:FF:000002">
    <property type="entry name" value="Phospholipase A2 group III"/>
    <property type="match status" value="1"/>
</dbReference>
<dbReference type="Gene3D" id="1.20.90.10">
    <property type="entry name" value="Phospholipase A2 domain"/>
    <property type="match status" value="1"/>
</dbReference>
<dbReference type="InterPro" id="IPR016090">
    <property type="entry name" value="PLipase_A2_dom"/>
</dbReference>
<dbReference type="InterPro" id="IPR036444">
    <property type="entry name" value="PLipase_A2_dom_sf"/>
</dbReference>
<dbReference type="InterPro" id="IPR033113">
    <property type="entry name" value="PLipase_A2_His_AS"/>
</dbReference>
<dbReference type="PANTHER" id="PTHR12253">
    <property type="entry name" value="RH14732P"/>
    <property type="match status" value="1"/>
</dbReference>
<dbReference type="Pfam" id="PF05826">
    <property type="entry name" value="Phospholip_A2_2"/>
    <property type="match status" value="1"/>
</dbReference>
<dbReference type="SMART" id="SM00085">
    <property type="entry name" value="PA2c"/>
    <property type="match status" value="1"/>
</dbReference>
<dbReference type="SUPFAM" id="SSF48619">
    <property type="entry name" value="Phospholipase A2, PLA2"/>
    <property type="match status" value="1"/>
</dbReference>
<dbReference type="PROSITE" id="PS00118">
    <property type="entry name" value="PA2_HIS"/>
    <property type="match status" value="1"/>
</dbReference>
<proteinExistence type="evidence at protein level"/>
<protein>
    <recommendedName>
        <fullName>Phospholipase A2</fullName>
        <shortName>PLA2</shortName>
        <ecNumber>3.1.1.4</ecNumber>
    </recommendedName>
    <alternativeName>
        <fullName>Phosphatidylcholine 2-acylhydrolase</fullName>
    </alternativeName>
    <allergenName>Bom p 1</allergenName>
</protein>
<accession>Q7M4I6</accession>
<feature type="chain" id="PRO_0000161725" description="Phospholipase A2">
    <location>
        <begin position="1"/>
        <end position="136"/>
    </location>
</feature>
<feature type="active site" evidence="2">
    <location>
        <position position="34"/>
    </location>
</feature>
<feature type="active site" evidence="2">
    <location>
        <position position="64"/>
    </location>
</feature>
<feature type="binding site" evidence="1">
    <location>
        <position position="8"/>
    </location>
    <ligand>
        <name>Ca(2+)</name>
        <dbReference type="ChEBI" id="CHEBI:29108"/>
    </ligand>
</feature>
<feature type="binding site" evidence="1">
    <location>
        <position position="10"/>
    </location>
    <ligand>
        <name>Ca(2+)</name>
        <dbReference type="ChEBI" id="CHEBI:29108"/>
    </ligand>
</feature>
<feature type="binding site" evidence="1">
    <location>
        <position position="12"/>
    </location>
    <ligand>
        <name>Ca(2+)</name>
        <dbReference type="ChEBI" id="CHEBI:29108"/>
    </ligand>
</feature>
<feature type="binding site" evidence="1">
    <location>
        <position position="35"/>
    </location>
    <ligand>
        <name>Ca(2+)</name>
        <dbReference type="ChEBI" id="CHEBI:29108"/>
    </ligand>
</feature>
<feature type="glycosylation site" description="N-linked (GlcNAc...) asparagine">
    <location>
        <position position="16"/>
    </location>
</feature>
<feature type="disulfide bond" evidence="1">
    <location>
        <begin position="9"/>
        <end position="31"/>
    </location>
</feature>
<feature type="disulfide bond" evidence="1">
    <location>
        <begin position="30"/>
        <end position="70"/>
    </location>
</feature>
<feature type="disulfide bond" evidence="1">
    <location>
        <begin position="37"/>
        <end position="63"/>
    </location>
</feature>
<feature type="disulfide bond" evidence="1">
    <location>
        <begin position="61"/>
        <end position="95"/>
    </location>
</feature>
<feature type="disulfide bond" evidence="1">
    <location>
        <begin position="105"/>
        <end position="115"/>
    </location>
</feature>
<sequence length="136" mass="15484">IIYPGTLWCGNGNIANGTNELGLWKETDACCRTHDMCPDIIEAHGSKHGLTNPADYTRLNCECDEEFRHCLHNSGDAVSAAFVGRTYFTILGTQCFRLDYPIVKCKVKSTILRECKEYEFDTNAPQKYQWFDVLSY</sequence>
<comment type="function">
    <text evidence="1">PLA2 catalyzes the calcium-dependent hydrolysis of the 2-acyl groups in 3-sn-phosphoglycerides.</text>
</comment>
<comment type="catalytic activity">
    <reaction evidence="2">
        <text>a 1,2-diacyl-sn-glycero-3-phosphocholine + H2O = a 1-acyl-sn-glycero-3-phosphocholine + a fatty acid + H(+)</text>
        <dbReference type="Rhea" id="RHEA:15801"/>
        <dbReference type="ChEBI" id="CHEBI:15377"/>
        <dbReference type="ChEBI" id="CHEBI:15378"/>
        <dbReference type="ChEBI" id="CHEBI:28868"/>
        <dbReference type="ChEBI" id="CHEBI:57643"/>
        <dbReference type="ChEBI" id="CHEBI:58168"/>
        <dbReference type="EC" id="3.1.1.4"/>
    </reaction>
</comment>
<comment type="cofactor">
    <cofactor evidence="1">
        <name>Ca(2+)</name>
        <dbReference type="ChEBI" id="CHEBI:29108"/>
    </cofactor>
    <text evidence="1">Binds 1 Ca(2+) ion.</text>
</comment>
<comment type="subcellular location">
    <subcellularLocation>
        <location>Secreted</location>
    </subcellularLocation>
</comment>
<comment type="tissue specificity">
    <text>Expressed by the venom gland.</text>
</comment>
<comment type="allergen">
    <text>Causes an allergic reaction in human.</text>
</comment>
<comment type="similarity">
    <text evidence="3">Belongs to the phospholipase A2 family.</text>
</comment>
<reference key="1">
    <citation type="submission" date="1995-05" db="PIR data bank">
        <authorList>
            <person name="Hoffman D.R."/>
        </authorList>
    </citation>
    <scope>PROTEIN SEQUENCE</scope>
    <source>
        <tissue>Venom</tissue>
    </source>
</reference>
<organism>
    <name type="scientific">Bombus pensylvanicus</name>
    <name type="common">American bumblebee</name>
    <name type="synonym">Apis pensylvanica</name>
    <dbReference type="NCBI Taxonomy" id="28643"/>
    <lineage>
        <taxon>Eukaryota</taxon>
        <taxon>Metazoa</taxon>
        <taxon>Ecdysozoa</taxon>
        <taxon>Arthropoda</taxon>
        <taxon>Hexapoda</taxon>
        <taxon>Insecta</taxon>
        <taxon>Pterygota</taxon>
        <taxon>Neoptera</taxon>
        <taxon>Endopterygota</taxon>
        <taxon>Hymenoptera</taxon>
        <taxon>Apocrita</taxon>
        <taxon>Aculeata</taxon>
        <taxon>Apoidea</taxon>
        <taxon>Anthophila</taxon>
        <taxon>Apidae</taxon>
        <taxon>Bombus</taxon>
        <taxon>Fervidobombus</taxon>
    </lineage>
</organism>
<evidence type="ECO:0000250" key="1"/>
<evidence type="ECO:0000255" key="2">
    <source>
        <dbReference type="PROSITE-ProRule" id="PRU10035"/>
    </source>
</evidence>
<evidence type="ECO:0000305" key="3"/>